<sequence length="518" mass="55324">MPAPSAEVFDRLRNLAAIKDVAARPTRTIDEVFTGKPLTTIPVGTAADVEAAFAEARAAQTDWAKRPVIERAAVIRRYRDLVIENREFLMDLLQAEAGKARWAAQEEIVDLIANANYYARVCVDLLKPRKAQPLLPGIGKTTVCYQPKGVVGVISPWNYPMTLTVSDSVPALVAGNAVVLKPDSQTPYCALACAELLYRAGLPRALYAIVPGPGSVVGTAITDNCDYLMFTGSSATGSRLAEHAGRRLIGFSAELGGKNPMIVARGANLDKVAKAATRACFSNAGQLCISIERIYVEKDIAEEFTRKFGDAVRNMKLGTAYDFSVDMGSLISEAQLKTVSGHVDDATAKGAKVIAGGKARPDIGPLFYEPTVLTNVAPEMECAANETFGPVVSIYPVADVDEAVEKANDTDYGLNASVWAGSTAEGQRIAARLRSGTVNVDEGYAFAWGSLSAPMGGMGLSGVGRRHGPEGLLKYTESQTIATARVFNLDPPFGIPATVWQKSLLPIVRTVMKLPGRR</sequence>
<comment type="function">
    <text evidence="1">Catalyzes the NADP(+)-dependent oxidation of succinate semialdehyde to succinate. Although it has succinate semialdehyde dehydrogenase activity, is likely to act physiologically on a different aldehyde(s) (By similarity).</text>
</comment>
<comment type="catalytic activity">
    <reaction>
        <text>succinate semialdehyde + NADP(+) + H2O = succinate + NADPH + 2 H(+)</text>
        <dbReference type="Rhea" id="RHEA:13213"/>
        <dbReference type="ChEBI" id="CHEBI:15377"/>
        <dbReference type="ChEBI" id="CHEBI:15378"/>
        <dbReference type="ChEBI" id="CHEBI:30031"/>
        <dbReference type="ChEBI" id="CHEBI:57706"/>
        <dbReference type="ChEBI" id="CHEBI:57783"/>
        <dbReference type="ChEBI" id="CHEBI:58349"/>
        <dbReference type="EC" id="1.2.1.79"/>
    </reaction>
</comment>
<comment type="similarity">
    <text evidence="3">Belongs to the aldehyde dehydrogenase family.</text>
</comment>
<protein>
    <recommendedName>
        <fullName>Putative succinate-semialdehyde dehydrogenase [NADP(+)] 2</fullName>
        <shortName>SSADH 2</shortName>
        <shortName>SSDH 2</shortName>
        <ecNumber>1.2.1.79</ecNumber>
    </recommendedName>
</protein>
<evidence type="ECO:0000250" key="1"/>
<evidence type="ECO:0000255" key="2">
    <source>
        <dbReference type="PROSITE-ProRule" id="PRU10007"/>
    </source>
</evidence>
<evidence type="ECO:0000305" key="3"/>
<accession>A5U390</accession>
<keyword id="KW-0521">NADP</keyword>
<keyword id="KW-0560">Oxidoreductase</keyword>
<keyword id="KW-1185">Reference proteome</keyword>
<organism>
    <name type="scientific">Mycobacterium tuberculosis (strain ATCC 25177 / H37Ra)</name>
    <dbReference type="NCBI Taxonomy" id="419947"/>
    <lineage>
        <taxon>Bacteria</taxon>
        <taxon>Bacillati</taxon>
        <taxon>Actinomycetota</taxon>
        <taxon>Actinomycetes</taxon>
        <taxon>Mycobacteriales</taxon>
        <taxon>Mycobacteriaceae</taxon>
        <taxon>Mycobacterium</taxon>
        <taxon>Mycobacterium tuberculosis complex</taxon>
    </lineage>
</organism>
<proteinExistence type="inferred from homology"/>
<reference key="1">
    <citation type="journal article" date="2008" name="PLoS ONE">
        <title>Genetic basis of virulence attenuation revealed by comparative genomic analysis of Mycobacterium tuberculosis strain H37Ra versus H37Rv.</title>
        <authorList>
            <person name="Zheng H."/>
            <person name="Lu L."/>
            <person name="Wang B."/>
            <person name="Pu S."/>
            <person name="Zhang X."/>
            <person name="Zhu G."/>
            <person name="Shi W."/>
            <person name="Zhang L."/>
            <person name="Wang H."/>
            <person name="Wang S."/>
            <person name="Zhao G."/>
            <person name="Zhang Y."/>
        </authorList>
    </citation>
    <scope>NUCLEOTIDE SEQUENCE [LARGE SCALE GENOMIC DNA]</scope>
    <source>
        <strain>ATCC 25177 / H37Ra</strain>
    </source>
</reference>
<gene>
    <name type="primary">gabD2</name>
    <name type="ordered locus">MRA_1741</name>
</gene>
<name>GABD2_MYCTA</name>
<feature type="chain" id="PRO_0000310712" description="Putative succinate-semialdehyde dehydrogenase [NADP(+)] 2">
    <location>
        <begin position="1"/>
        <end position="518"/>
    </location>
</feature>
<feature type="active site" description="Proton acceptor" evidence="2">
    <location>
        <position position="254"/>
    </location>
</feature>
<feature type="active site" description="Nucleophile" evidence="2">
    <location>
        <position position="288"/>
    </location>
</feature>
<feature type="binding site" evidence="1">
    <location>
        <begin position="157"/>
        <end position="158"/>
    </location>
    <ligand>
        <name>NADP(+)</name>
        <dbReference type="ChEBI" id="CHEBI:58349"/>
    </ligand>
</feature>
<feature type="binding site" evidence="1">
    <location>
        <begin position="181"/>
        <end position="184"/>
    </location>
    <ligand>
        <name>NADP(+)</name>
        <dbReference type="ChEBI" id="CHEBI:58349"/>
    </ligand>
</feature>
<feature type="binding site" evidence="1">
    <location>
        <begin position="232"/>
        <end position="233"/>
    </location>
    <ligand>
        <name>NADP(+)</name>
        <dbReference type="ChEBI" id="CHEBI:58349"/>
    </ligand>
</feature>
<feature type="binding site" evidence="1">
    <location>
        <position position="255"/>
    </location>
    <ligand>
        <name>NADP(+)</name>
        <dbReference type="ChEBI" id="CHEBI:58349"/>
    </ligand>
</feature>
<feature type="binding site" evidence="1">
    <location>
        <position position="386"/>
    </location>
    <ligand>
        <name>NADP(+)</name>
        <dbReference type="ChEBI" id="CHEBI:58349"/>
    </ligand>
</feature>
<dbReference type="EC" id="1.2.1.79"/>
<dbReference type="EMBL" id="CP000611">
    <property type="protein sequence ID" value="ABQ73490.1"/>
    <property type="molecule type" value="Genomic_DNA"/>
</dbReference>
<dbReference type="RefSeq" id="WP_003898989.1">
    <property type="nucleotide sequence ID" value="NZ_CP016972.1"/>
</dbReference>
<dbReference type="SMR" id="A5U390"/>
<dbReference type="KEGG" id="mra:MRA_1741"/>
<dbReference type="eggNOG" id="COG1012">
    <property type="taxonomic scope" value="Bacteria"/>
</dbReference>
<dbReference type="HOGENOM" id="CLU_005391_1_0_11"/>
<dbReference type="Proteomes" id="UP000001988">
    <property type="component" value="Chromosome"/>
</dbReference>
<dbReference type="GO" id="GO:0036243">
    <property type="term" value="F:succinate-semialdehyde dehydrogenase (NADP+) activity"/>
    <property type="evidence" value="ECO:0007669"/>
    <property type="project" value="UniProtKB-EC"/>
</dbReference>
<dbReference type="CDD" id="cd07101">
    <property type="entry name" value="ALDH_SSADH2_GabD2"/>
    <property type="match status" value="1"/>
</dbReference>
<dbReference type="FunFam" id="3.40.309.10:FF:000009">
    <property type="entry name" value="Aldehyde dehydrogenase A"/>
    <property type="match status" value="1"/>
</dbReference>
<dbReference type="FunFam" id="3.40.605.10:FF:000010">
    <property type="entry name" value="N-succinylglutamate 5-semialdehyde dehydrogenase"/>
    <property type="match status" value="1"/>
</dbReference>
<dbReference type="Gene3D" id="3.40.605.10">
    <property type="entry name" value="Aldehyde Dehydrogenase, Chain A, domain 1"/>
    <property type="match status" value="1"/>
</dbReference>
<dbReference type="Gene3D" id="3.40.309.10">
    <property type="entry name" value="Aldehyde Dehydrogenase, Chain A, domain 2"/>
    <property type="match status" value="1"/>
</dbReference>
<dbReference type="InterPro" id="IPR016161">
    <property type="entry name" value="Ald_DH/histidinol_DH"/>
</dbReference>
<dbReference type="InterPro" id="IPR016163">
    <property type="entry name" value="Ald_DH_C"/>
</dbReference>
<dbReference type="InterPro" id="IPR029510">
    <property type="entry name" value="Ald_DH_CS_GLU"/>
</dbReference>
<dbReference type="InterPro" id="IPR016162">
    <property type="entry name" value="Ald_DH_N"/>
</dbReference>
<dbReference type="InterPro" id="IPR015590">
    <property type="entry name" value="Aldehyde_DH_dom"/>
</dbReference>
<dbReference type="NCBIfam" id="NF006916">
    <property type="entry name" value="PRK09407.1"/>
    <property type="match status" value="1"/>
</dbReference>
<dbReference type="PANTHER" id="PTHR11699">
    <property type="entry name" value="ALDEHYDE DEHYDROGENASE-RELATED"/>
    <property type="match status" value="1"/>
</dbReference>
<dbReference type="Pfam" id="PF00171">
    <property type="entry name" value="Aldedh"/>
    <property type="match status" value="1"/>
</dbReference>
<dbReference type="SUPFAM" id="SSF53720">
    <property type="entry name" value="ALDH-like"/>
    <property type="match status" value="1"/>
</dbReference>
<dbReference type="PROSITE" id="PS00687">
    <property type="entry name" value="ALDEHYDE_DEHYDR_GLU"/>
    <property type="match status" value="1"/>
</dbReference>